<gene>
    <name evidence="1" type="primary">cysS</name>
    <name type="ordered locus">BPP2283</name>
</gene>
<reference key="1">
    <citation type="journal article" date="2003" name="Nat. Genet.">
        <title>Comparative analysis of the genome sequences of Bordetella pertussis, Bordetella parapertussis and Bordetella bronchiseptica.</title>
        <authorList>
            <person name="Parkhill J."/>
            <person name="Sebaihia M."/>
            <person name="Preston A."/>
            <person name="Murphy L.D."/>
            <person name="Thomson N.R."/>
            <person name="Harris D.E."/>
            <person name="Holden M.T.G."/>
            <person name="Churcher C.M."/>
            <person name="Bentley S.D."/>
            <person name="Mungall K.L."/>
            <person name="Cerdeno-Tarraga A.-M."/>
            <person name="Temple L."/>
            <person name="James K.D."/>
            <person name="Harris B."/>
            <person name="Quail M.A."/>
            <person name="Achtman M."/>
            <person name="Atkin R."/>
            <person name="Baker S."/>
            <person name="Basham D."/>
            <person name="Bason N."/>
            <person name="Cherevach I."/>
            <person name="Chillingworth T."/>
            <person name="Collins M."/>
            <person name="Cronin A."/>
            <person name="Davis P."/>
            <person name="Doggett J."/>
            <person name="Feltwell T."/>
            <person name="Goble A."/>
            <person name="Hamlin N."/>
            <person name="Hauser H."/>
            <person name="Holroyd S."/>
            <person name="Jagels K."/>
            <person name="Leather S."/>
            <person name="Moule S."/>
            <person name="Norberczak H."/>
            <person name="O'Neil S."/>
            <person name="Ormond D."/>
            <person name="Price C."/>
            <person name="Rabbinowitsch E."/>
            <person name="Rutter S."/>
            <person name="Sanders M."/>
            <person name="Saunders D."/>
            <person name="Seeger K."/>
            <person name="Sharp S."/>
            <person name="Simmonds M."/>
            <person name="Skelton J."/>
            <person name="Squares R."/>
            <person name="Squares S."/>
            <person name="Stevens K."/>
            <person name="Unwin L."/>
            <person name="Whitehead S."/>
            <person name="Barrell B.G."/>
            <person name="Maskell D.J."/>
        </authorList>
    </citation>
    <scope>NUCLEOTIDE SEQUENCE [LARGE SCALE GENOMIC DNA]</scope>
    <source>
        <strain>12822 / ATCC BAA-587 / NCTC 13253</strain>
    </source>
</reference>
<keyword id="KW-0030">Aminoacyl-tRNA synthetase</keyword>
<keyword id="KW-0067">ATP-binding</keyword>
<keyword id="KW-0963">Cytoplasm</keyword>
<keyword id="KW-0436">Ligase</keyword>
<keyword id="KW-0479">Metal-binding</keyword>
<keyword id="KW-0547">Nucleotide-binding</keyword>
<keyword id="KW-0648">Protein biosynthesis</keyword>
<keyword id="KW-0862">Zinc</keyword>
<organism>
    <name type="scientific">Bordetella parapertussis (strain 12822 / ATCC BAA-587 / NCTC 13253)</name>
    <dbReference type="NCBI Taxonomy" id="257311"/>
    <lineage>
        <taxon>Bacteria</taxon>
        <taxon>Pseudomonadati</taxon>
        <taxon>Pseudomonadota</taxon>
        <taxon>Betaproteobacteria</taxon>
        <taxon>Burkholderiales</taxon>
        <taxon>Alcaligenaceae</taxon>
        <taxon>Bordetella</taxon>
    </lineage>
</organism>
<evidence type="ECO:0000255" key="1">
    <source>
        <dbReference type="HAMAP-Rule" id="MF_00041"/>
    </source>
</evidence>
<evidence type="ECO:0000305" key="2"/>
<dbReference type="EC" id="6.1.1.16" evidence="1"/>
<dbReference type="EMBL" id="BX640429">
    <property type="protein sequence ID" value="CAE37581.1"/>
    <property type="status" value="ALT_INIT"/>
    <property type="molecule type" value="Genomic_DNA"/>
</dbReference>
<dbReference type="RefSeq" id="WP_003810003.1">
    <property type="nucleotide sequence ID" value="NC_002928.3"/>
</dbReference>
<dbReference type="SMR" id="Q7W862"/>
<dbReference type="GeneID" id="93204060"/>
<dbReference type="KEGG" id="bpa:BPP2283"/>
<dbReference type="HOGENOM" id="CLU_013528_0_1_4"/>
<dbReference type="Proteomes" id="UP000001421">
    <property type="component" value="Chromosome"/>
</dbReference>
<dbReference type="GO" id="GO:0005829">
    <property type="term" value="C:cytosol"/>
    <property type="evidence" value="ECO:0007669"/>
    <property type="project" value="TreeGrafter"/>
</dbReference>
<dbReference type="GO" id="GO:0005524">
    <property type="term" value="F:ATP binding"/>
    <property type="evidence" value="ECO:0007669"/>
    <property type="project" value="UniProtKB-UniRule"/>
</dbReference>
<dbReference type="GO" id="GO:0004817">
    <property type="term" value="F:cysteine-tRNA ligase activity"/>
    <property type="evidence" value="ECO:0007669"/>
    <property type="project" value="UniProtKB-UniRule"/>
</dbReference>
<dbReference type="GO" id="GO:0008270">
    <property type="term" value="F:zinc ion binding"/>
    <property type="evidence" value="ECO:0007669"/>
    <property type="project" value="UniProtKB-UniRule"/>
</dbReference>
<dbReference type="GO" id="GO:0006423">
    <property type="term" value="P:cysteinyl-tRNA aminoacylation"/>
    <property type="evidence" value="ECO:0007669"/>
    <property type="project" value="UniProtKB-UniRule"/>
</dbReference>
<dbReference type="CDD" id="cd00672">
    <property type="entry name" value="CysRS_core"/>
    <property type="match status" value="1"/>
</dbReference>
<dbReference type="Gene3D" id="1.20.120.1910">
    <property type="entry name" value="Cysteine-tRNA ligase, C-terminal anti-codon recognition domain"/>
    <property type="match status" value="1"/>
</dbReference>
<dbReference type="Gene3D" id="3.40.50.620">
    <property type="entry name" value="HUPs"/>
    <property type="match status" value="1"/>
</dbReference>
<dbReference type="HAMAP" id="MF_00041">
    <property type="entry name" value="Cys_tRNA_synth"/>
    <property type="match status" value="1"/>
</dbReference>
<dbReference type="InterPro" id="IPR015803">
    <property type="entry name" value="Cys-tRNA-ligase"/>
</dbReference>
<dbReference type="InterPro" id="IPR015273">
    <property type="entry name" value="Cys-tRNA-synt_Ia_DALR"/>
</dbReference>
<dbReference type="InterPro" id="IPR024909">
    <property type="entry name" value="Cys-tRNA/MSH_ligase"/>
</dbReference>
<dbReference type="InterPro" id="IPR014729">
    <property type="entry name" value="Rossmann-like_a/b/a_fold"/>
</dbReference>
<dbReference type="InterPro" id="IPR032678">
    <property type="entry name" value="tRNA-synt_1_cat_dom"/>
</dbReference>
<dbReference type="InterPro" id="IPR009080">
    <property type="entry name" value="tRNAsynth_Ia_anticodon-bd"/>
</dbReference>
<dbReference type="NCBIfam" id="TIGR00435">
    <property type="entry name" value="cysS"/>
    <property type="match status" value="1"/>
</dbReference>
<dbReference type="PANTHER" id="PTHR10890:SF3">
    <property type="entry name" value="CYSTEINE--TRNA LIGASE, CYTOPLASMIC"/>
    <property type="match status" value="1"/>
</dbReference>
<dbReference type="PANTHER" id="PTHR10890">
    <property type="entry name" value="CYSTEINYL-TRNA SYNTHETASE"/>
    <property type="match status" value="1"/>
</dbReference>
<dbReference type="Pfam" id="PF09190">
    <property type="entry name" value="DALR_2"/>
    <property type="match status" value="1"/>
</dbReference>
<dbReference type="Pfam" id="PF01406">
    <property type="entry name" value="tRNA-synt_1e"/>
    <property type="match status" value="1"/>
</dbReference>
<dbReference type="PRINTS" id="PR00983">
    <property type="entry name" value="TRNASYNTHCYS"/>
</dbReference>
<dbReference type="SMART" id="SM00840">
    <property type="entry name" value="DALR_2"/>
    <property type="match status" value="1"/>
</dbReference>
<dbReference type="SUPFAM" id="SSF47323">
    <property type="entry name" value="Anticodon-binding domain of a subclass of class I aminoacyl-tRNA synthetases"/>
    <property type="match status" value="1"/>
</dbReference>
<dbReference type="SUPFAM" id="SSF52374">
    <property type="entry name" value="Nucleotidylyl transferase"/>
    <property type="match status" value="1"/>
</dbReference>
<comment type="catalytic activity">
    <reaction evidence="1">
        <text>tRNA(Cys) + L-cysteine + ATP = L-cysteinyl-tRNA(Cys) + AMP + diphosphate</text>
        <dbReference type="Rhea" id="RHEA:17773"/>
        <dbReference type="Rhea" id="RHEA-COMP:9661"/>
        <dbReference type="Rhea" id="RHEA-COMP:9679"/>
        <dbReference type="ChEBI" id="CHEBI:30616"/>
        <dbReference type="ChEBI" id="CHEBI:33019"/>
        <dbReference type="ChEBI" id="CHEBI:35235"/>
        <dbReference type="ChEBI" id="CHEBI:78442"/>
        <dbReference type="ChEBI" id="CHEBI:78517"/>
        <dbReference type="ChEBI" id="CHEBI:456215"/>
        <dbReference type="EC" id="6.1.1.16"/>
    </reaction>
</comment>
<comment type="cofactor">
    <cofactor evidence="1">
        <name>Zn(2+)</name>
        <dbReference type="ChEBI" id="CHEBI:29105"/>
    </cofactor>
    <text evidence="1">Binds 1 zinc ion per subunit.</text>
</comment>
<comment type="subunit">
    <text evidence="1">Monomer.</text>
</comment>
<comment type="subcellular location">
    <subcellularLocation>
        <location evidence="1">Cytoplasm</location>
    </subcellularLocation>
</comment>
<comment type="similarity">
    <text evidence="1">Belongs to the class-I aminoacyl-tRNA synthetase family.</text>
</comment>
<comment type="sequence caution" evidence="2">
    <conflict type="erroneous initiation">
        <sequence resource="EMBL-CDS" id="CAE37581"/>
    </conflict>
</comment>
<feature type="chain" id="PRO_0000159361" description="Cysteine--tRNA ligase">
    <location>
        <begin position="1"/>
        <end position="485"/>
    </location>
</feature>
<feature type="short sequence motif" description="'HIGH' region">
    <location>
        <begin position="30"/>
        <end position="40"/>
    </location>
</feature>
<feature type="short sequence motif" description="'KMSKS' region">
    <location>
        <begin position="269"/>
        <end position="273"/>
    </location>
</feature>
<feature type="binding site" evidence="1">
    <location>
        <position position="28"/>
    </location>
    <ligand>
        <name>Zn(2+)</name>
        <dbReference type="ChEBI" id="CHEBI:29105"/>
    </ligand>
</feature>
<feature type="binding site" evidence="1">
    <location>
        <position position="212"/>
    </location>
    <ligand>
        <name>Zn(2+)</name>
        <dbReference type="ChEBI" id="CHEBI:29105"/>
    </ligand>
</feature>
<feature type="binding site" evidence="1">
    <location>
        <position position="237"/>
    </location>
    <ligand>
        <name>Zn(2+)</name>
        <dbReference type="ChEBI" id="CHEBI:29105"/>
    </ligand>
</feature>
<feature type="binding site" evidence="1">
    <location>
        <position position="241"/>
    </location>
    <ligand>
        <name>Zn(2+)</name>
        <dbReference type="ChEBI" id="CHEBI:29105"/>
    </ligand>
</feature>
<feature type="binding site" evidence="1">
    <location>
        <position position="272"/>
    </location>
    <ligand>
        <name>ATP</name>
        <dbReference type="ChEBI" id="CHEBI:30616"/>
    </ligand>
</feature>
<name>SYC_BORPA</name>
<proteinExistence type="inferred from homology"/>
<protein>
    <recommendedName>
        <fullName evidence="1">Cysteine--tRNA ligase</fullName>
        <ecNumber evidence="1">6.1.1.16</ecNumber>
    </recommendedName>
    <alternativeName>
        <fullName evidence="1">Cysteinyl-tRNA synthetase</fullName>
        <shortName evidence="1">CysRS</shortName>
    </alternativeName>
</protein>
<sequence>MLHIYNTLSRTKEPFKPAHAGQVRMYVCGMTVYDYCHLGHARMLVAFDVVQRWLRASGLAVDYVRNITDIDDKIIRRAVETGRRIGEVTEYYIAAMHADERALGVQPPDREPRATQYVGEMLDIIGRLESKGLAYRAEDGDVNYAVRGFADYGKLSGKSLDDLRAGERVAVGSAKRDPLDFVLWKSAKPQEPDDTKWESPYGLGRPGWHIECSAMSKTLLGLPLDIHGGGPDLKFPHHENEIAQTEGAFGGALANVWMHCGPLMVDADKMSKSLGNFRTIRQTIAQGALSDTQAEYAVNPREAEMLRFFIVRNHYRSPQNYAPDNLVDAQNALDRLYQALQNTAADGQGVDWSEPQAQAFKAAMDDDFNSSGAVAALFELASEANRTGSARAAGQLKALGAVLGLLQQDPPAYFQSPTRYSAAAREQGAPAAALDAAAIEARIAERAAAKAARDFARADAIRAELRAAGVELDDKPGGLTQWRRA</sequence>
<accession>Q7W862</accession>